<sequence length="151" mass="17201">MSTPDNRSVNFFSLFRRGQHYAKTWPMEKRLAPVFVENRVIRMTRYAIRFMPPVAVFTLCWQIALGGQLGPAVATALFALSLPMQGLWWLGKRSVTPLPPSILNWFYEVRGKLQEAGQALAPVEGKPDYQALADTLKRAFKQLDKTFLDDL</sequence>
<reference key="1">
    <citation type="journal article" date="2011" name="J. Bacteriol.">
        <title>Comparative genomics of 28 Salmonella enterica isolates: evidence for CRISPR-mediated adaptive sublineage evolution.</title>
        <authorList>
            <person name="Fricke W.F."/>
            <person name="Mammel M.K."/>
            <person name="McDermott P.F."/>
            <person name="Tartera C."/>
            <person name="White D.G."/>
            <person name="Leclerc J.E."/>
            <person name="Ravel J."/>
            <person name="Cebula T.A."/>
        </authorList>
    </citation>
    <scope>NUCLEOTIDE SEQUENCE [LARGE SCALE GENOMIC DNA]</scope>
    <source>
        <strain>SL254</strain>
    </source>
</reference>
<organism>
    <name type="scientific">Salmonella newport (strain SL254)</name>
    <dbReference type="NCBI Taxonomy" id="423368"/>
    <lineage>
        <taxon>Bacteria</taxon>
        <taxon>Pseudomonadati</taxon>
        <taxon>Pseudomonadota</taxon>
        <taxon>Gammaproteobacteria</taxon>
        <taxon>Enterobacterales</taxon>
        <taxon>Enterobacteriaceae</taxon>
        <taxon>Salmonella</taxon>
    </lineage>
</organism>
<accession>B4SZ08</accession>
<protein>
    <recommendedName>
        <fullName evidence="1">UPF0208 membrane protein YfbV</fullName>
    </recommendedName>
</protein>
<gene>
    <name evidence="1" type="primary">yfbV</name>
    <name type="ordered locus">SNSL254_A2521</name>
</gene>
<proteinExistence type="inferred from homology"/>
<dbReference type="EMBL" id="CP001113">
    <property type="protein sequence ID" value="ACF63476.1"/>
    <property type="molecule type" value="Genomic_DNA"/>
</dbReference>
<dbReference type="RefSeq" id="WP_000106617.1">
    <property type="nucleotide sequence ID" value="NZ_CCMR01000001.1"/>
</dbReference>
<dbReference type="KEGG" id="see:SNSL254_A2521"/>
<dbReference type="HOGENOM" id="CLU_128746_0_0_6"/>
<dbReference type="Proteomes" id="UP000008824">
    <property type="component" value="Chromosome"/>
</dbReference>
<dbReference type="GO" id="GO:0005886">
    <property type="term" value="C:plasma membrane"/>
    <property type="evidence" value="ECO:0007669"/>
    <property type="project" value="UniProtKB-SubCell"/>
</dbReference>
<dbReference type="HAMAP" id="MF_01101">
    <property type="entry name" value="UPF0208"/>
    <property type="match status" value="1"/>
</dbReference>
<dbReference type="InterPro" id="IPR007334">
    <property type="entry name" value="UPF0208"/>
</dbReference>
<dbReference type="NCBIfam" id="NF002493">
    <property type="entry name" value="PRK01816.1"/>
    <property type="match status" value="1"/>
</dbReference>
<dbReference type="Pfam" id="PF04217">
    <property type="entry name" value="DUF412"/>
    <property type="match status" value="1"/>
</dbReference>
<comment type="subcellular location">
    <subcellularLocation>
        <location evidence="1">Cell inner membrane</location>
        <topology evidence="1">Multi-pass membrane protein</topology>
    </subcellularLocation>
</comment>
<comment type="similarity">
    <text evidence="1">Belongs to the UPF0208 family.</text>
</comment>
<name>YFBV_SALNS</name>
<keyword id="KW-0997">Cell inner membrane</keyword>
<keyword id="KW-1003">Cell membrane</keyword>
<keyword id="KW-0472">Membrane</keyword>
<keyword id="KW-0812">Transmembrane</keyword>
<keyword id="KW-1133">Transmembrane helix</keyword>
<feature type="chain" id="PRO_1000137000" description="UPF0208 membrane protein YfbV">
    <location>
        <begin position="1"/>
        <end position="151"/>
    </location>
</feature>
<feature type="transmembrane region" description="Helical" evidence="1">
    <location>
        <begin position="46"/>
        <end position="65"/>
    </location>
</feature>
<feature type="transmembrane region" description="Helical" evidence="1">
    <location>
        <begin position="69"/>
        <end position="91"/>
    </location>
</feature>
<evidence type="ECO:0000255" key="1">
    <source>
        <dbReference type="HAMAP-Rule" id="MF_01101"/>
    </source>
</evidence>